<gene>
    <name evidence="1" type="primary">lipA</name>
    <name type="ordered locus">BDI_2192</name>
</gene>
<organism>
    <name type="scientific">Parabacteroides distasonis (strain ATCC 8503 / DSM 20701 / CIP 104284 / JCM 5825 / NCTC 11152)</name>
    <dbReference type="NCBI Taxonomy" id="435591"/>
    <lineage>
        <taxon>Bacteria</taxon>
        <taxon>Pseudomonadati</taxon>
        <taxon>Bacteroidota</taxon>
        <taxon>Bacteroidia</taxon>
        <taxon>Bacteroidales</taxon>
        <taxon>Tannerellaceae</taxon>
        <taxon>Parabacteroides</taxon>
    </lineage>
</organism>
<sequence>MAQHLRKPDWLKIRLGGNEQFTKTKSIVESHCLHTICTSGKCPNMGECWSRGTATFMIGGEICTRSCRFCNTLTGKPLPLDPKEPANVAESIRLMNLKHAVITSVDRDDLPDLGASHWVNTIRTIKEVNPQTTVEVLIPDFQGRLDLVDQVVDAAPEIISHNMETVRRISPQVRSAAKYDVSLSVLRRIAERGVVAKTGIMVGLGETEDEVLELMDDVLQAGVSVLTIGQYLQPSRKNIPVSEYVTPERFEYYRQQAVNKGFKKVESAPLVRSSYHAEKHI</sequence>
<feature type="chain" id="PRO_1000012250" description="Lipoyl synthase">
    <location>
        <begin position="1"/>
        <end position="281"/>
    </location>
</feature>
<feature type="domain" description="Radical SAM core" evidence="2">
    <location>
        <begin position="49"/>
        <end position="263"/>
    </location>
</feature>
<feature type="binding site" evidence="1">
    <location>
        <position position="37"/>
    </location>
    <ligand>
        <name>[4Fe-4S] cluster</name>
        <dbReference type="ChEBI" id="CHEBI:49883"/>
        <label>1</label>
    </ligand>
</feature>
<feature type="binding site" evidence="1">
    <location>
        <position position="42"/>
    </location>
    <ligand>
        <name>[4Fe-4S] cluster</name>
        <dbReference type="ChEBI" id="CHEBI:49883"/>
        <label>1</label>
    </ligand>
</feature>
<feature type="binding site" evidence="1">
    <location>
        <position position="48"/>
    </location>
    <ligand>
        <name>[4Fe-4S] cluster</name>
        <dbReference type="ChEBI" id="CHEBI:49883"/>
        <label>1</label>
    </ligand>
</feature>
<feature type="binding site" evidence="1">
    <location>
        <position position="63"/>
    </location>
    <ligand>
        <name>[4Fe-4S] cluster</name>
        <dbReference type="ChEBI" id="CHEBI:49883"/>
        <label>2</label>
        <note>4Fe-4S-S-AdoMet</note>
    </ligand>
</feature>
<feature type="binding site" evidence="1">
    <location>
        <position position="67"/>
    </location>
    <ligand>
        <name>[4Fe-4S] cluster</name>
        <dbReference type="ChEBI" id="CHEBI:49883"/>
        <label>2</label>
        <note>4Fe-4S-S-AdoMet</note>
    </ligand>
</feature>
<feature type="binding site" evidence="1">
    <location>
        <position position="70"/>
    </location>
    <ligand>
        <name>[4Fe-4S] cluster</name>
        <dbReference type="ChEBI" id="CHEBI:49883"/>
        <label>2</label>
        <note>4Fe-4S-S-AdoMet</note>
    </ligand>
</feature>
<feature type="binding site" evidence="1">
    <location>
        <position position="274"/>
    </location>
    <ligand>
        <name>[4Fe-4S] cluster</name>
        <dbReference type="ChEBI" id="CHEBI:49883"/>
        <label>1</label>
    </ligand>
</feature>
<evidence type="ECO:0000255" key="1">
    <source>
        <dbReference type="HAMAP-Rule" id="MF_00206"/>
    </source>
</evidence>
<evidence type="ECO:0000255" key="2">
    <source>
        <dbReference type="PROSITE-ProRule" id="PRU01266"/>
    </source>
</evidence>
<accession>A6LE09</accession>
<comment type="function">
    <text evidence="1">Catalyzes the radical-mediated insertion of two sulfur atoms into the C-6 and C-8 positions of the octanoyl moiety bound to the lipoyl domains of lipoate-dependent enzymes, thereby converting the octanoylated domains into lipoylated derivatives.</text>
</comment>
<comment type="catalytic activity">
    <reaction evidence="1">
        <text>[[Fe-S] cluster scaffold protein carrying a second [4Fe-4S](2+) cluster] + N(6)-octanoyl-L-lysyl-[protein] + 2 oxidized [2Fe-2S]-[ferredoxin] + 2 S-adenosyl-L-methionine + 4 H(+) = [[Fe-S] cluster scaffold protein] + N(6)-[(R)-dihydrolipoyl]-L-lysyl-[protein] + 4 Fe(3+) + 2 hydrogen sulfide + 2 5'-deoxyadenosine + 2 L-methionine + 2 reduced [2Fe-2S]-[ferredoxin]</text>
        <dbReference type="Rhea" id="RHEA:16585"/>
        <dbReference type="Rhea" id="RHEA-COMP:9928"/>
        <dbReference type="Rhea" id="RHEA-COMP:10000"/>
        <dbReference type="Rhea" id="RHEA-COMP:10001"/>
        <dbReference type="Rhea" id="RHEA-COMP:10475"/>
        <dbReference type="Rhea" id="RHEA-COMP:14568"/>
        <dbReference type="Rhea" id="RHEA-COMP:14569"/>
        <dbReference type="ChEBI" id="CHEBI:15378"/>
        <dbReference type="ChEBI" id="CHEBI:17319"/>
        <dbReference type="ChEBI" id="CHEBI:29034"/>
        <dbReference type="ChEBI" id="CHEBI:29919"/>
        <dbReference type="ChEBI" id="CHEBI:33722"/>
        <dbReference type="ChEBI" id="CHEBI:33737"/>
        <dbReference type="ChEBI" id="CHEBI:33738"/>
        <dbReference type="ChEBI" id="CHEBI:57844"/>
        <dbReference type="ChEBI" id="CHEBI:59789"/>
        <dbReference type="ChEBI" id="CHEBI:78809"/>
        <dbReference type="ChEBI" id="CHEBI:83100"/>
        <dbReference type="EC" id="2.8.1.8"/>
    </reaction>
</comment>
<comment type="cofactor">
    <cofactor evidence="1">
        <name>[4Fe-4S] cluster</name>
        <dbReference type="ChEBI" id="CHEBI:49883"/>
    </cofactor>
    <text evidence="1">Binds 2 [4Fe-4S] clusters per subunit. One cluster is coordinated with 3 cysteines and an exchangeable S-adenosyl-L-methionine.</text>
</comment>
<comment type="pathway">
    <text evidence="1">Protein modification; protein lipoylation via endogenous pathway; protein N(6)-(lipoyl)lysine from octanoyl-[acyl-carrier-protein]: step 2/2.</text>
</comment>
<comment type="subcellular location">
    <subcellularLocation>
        <location evidence="1">Cytoplasm</location>
    </subcellularLocation>
</comment>
<comment type="similarity">
    <text evidence="1">Belongs to the radical SAM superfamily. Lipoyl synthase family.</text>
</comment>
<dbReference type="EC" id="2.8.1.8" evidence="1"/>
<dbReference type="EMBL" id="CP000140">
    <property type="protein sequence ID" value="ABR43923.1"/>
    <property type="molecule type" value="Genomic_DNA"/>
</dbReference>
<dbReference type="RefSeq" id="WP_005854269.1">
    <property type="nucleotide sequence ID" value="NC_009615.1"/>
</dbReference>
<dbReference type="SMR" id="A6LE09"/>
<dbReference type="STRING" id="435591.BDI_2192"/>
<dbReference type="PaxDb" id="435591-BDI_2192"/>
<dbReference type="KEGG" id="pdi:BDI_2192"/>
<dbReference type="eggNOG" id="COG0320">
    <property type="taxonomic scope" value="Bacteria"/>
</dbReference>
<dbReference type="HOGENOM" id="CLU_033144_2_1_10"/>
<dbReference type="BioCyc" id="PDIS435591:G1G5A-2250-MONOMER"/>
<dbReference type="UniPathway" id="UPA00538">
    <property type="reaction ID" value="UER00593"/>
</dbReference>
<dbReference type="Proteomes" id="UP000000566">
    <property type="component" value="Chromosome"/>
</dbReference>
<dbReference type="GO" id="GO:0005737">
    <property type="term" value="C:cytoplasm"/>
    <property type="evidence" value="ECO:0007669"/>
    <property type="project" value="UniProtKB-SubCell"/>
</dbReference>
<dbReference type="GO" id="GO:0051539">
    <property type="term" value="F:4 iron, 4 sulfur cluster binding"/>
    <property type="evidence" value="ECO:0007669"/>
    <property type="project" value="UniProtKB-UniRule"/>
</dbReference>
<dbReference type="GO" id="GO:0016992">
    <property type="term" value="F:lipoate synthase activity"/>
    <property type="evidence" value="ECO:0007669"/>
    <property type="project" value="UniProtKB-UniRule"/>
</dbReference>
<dbReference type="GO" id="GO:0046872">
    <property type="term" value="F:metal ion binding"/>
    <property type="evidence" value="ECO:0007669"/>
    <property type="project" value="UniProtKB-KW"/>
</dbReference>
<dbReference type="CDD" id="cd01335">
    <property type="entry name" value="Radical_SAM"/>
    <property type="match status" value="1"/>
</dbReference>
<dbReference type="FunFam" id="3.20.20.70:FF:000040">
    <property type="entry name" value="Lipoyl synthase"/>
    <property type="match status" value="1"/>
</dbReference>
<dbReference type="Gene3D" id="3.20.20.70">
    <property type="entry name" value="Aldolase class I"/>
    <property type="match status" value="1"/>
</dbReference>
<dbReference type="HAMAP" id="MF_00206">
    <property type="entry name" value="Lipoyl_synth"/>
    <property type="match status" value="1"/>
</dbReference>
<dbReference type="InterPro" id="IPR013785">
    <property type="entry name" value="Aldolase_TIM"/>
</dbReference>
<dbReference type="InterPro" id="IPR006638">
    <property type="entry name" value="Elp3/MiaA/NifB-like_rSAM"/>
</dbReference>
<dbReference type="InterPro" id="IPR003698">
    <property type="entry name" value="Lipoyl_synth"/>
</dbReference>
<dbReference type="InterPro" id="IPR007197">
    <property type="entry name" value="rSAM"/>
</dbReference>
<dbReference type="NCBIfam" id="TIGR00510">
    <property type="entry name" value="lipA"/>
    <property type="match status" value="1"/>
</dbReference>
<dbReference type="NCBIfam" id="NF004019">
    <property type="entry name" value="PRK05481.1"/>
    <property type="match status" value="1"/>
</dbReference>
<dbReference type="NCBIfam" id="NF009544">
    <property type="entry name" value="PRK12928.1"/>
    <property type="match status" value="1"/>
</dbReference>
<dbReference type="PANTHER" id="PTHR10949">
    <property type="entry name" value="LIPOYL SYNTHASE"/>
    <property type="match status" value="1"/>
</dbReference>
<dbReference type="PANTHER" id="PTHR10949:SF0">
    <property type="entry name" value="LIPOYL SYNTHASE, MITOCHONDRIAL"/>
    <property type="match status" value="1"/>
</dbReference>
<dbReference type="Pfam" id="PF04055">
    <property type="entry name" value="Radical_SAM"/>
    <property type="match status" value="1"/>
</dbReference>
<dbReference type="PIRSF" id="PIRSF005963">
    <property type="entry name" value="Lipoyl_synth"/>
    <property type="match status" value="1"/>
</dbReference>
<dbReference type="SFLD" id="SFLDF00271">
    <property type="entry name" value="lipoyl_synthase"/>
    <property type="match status" value="1"/>
</dbReference>
<dbReference type="SFLD" id="SFLDG01058">
    <property type="entry name" value="lipoyl_synthase_like"/>
    <property type="match status" value="1"/>
</dbReference>
<dbReference type="SMART" id="SM00729">
    <property type="entry name" value="Elp3"/>
    <property type="match status" value="1"/>
</dbReference>
<dbReference type="SUPFAM" id="SSF102114">
    <property type="entry name" value="Radical SAM enzymes"/>
    <property type="match status" value="1"/>
</dbReference>
<dbReference type="PROSITE" id="PS51918">
    <property type="entry name" value="RADICAL_SAM"/>
    <property type="match status" value="1"/>
</dbReference>
<name>LIPA_PARD8</name>
<reference key="1">
    <citation type="journal article" date="2007" name="PLoS Biol.">
        <title>Evolution of symbiotic bacteria in the distal human intestine.</title>
        <authorList>
            <person name="Xu J."/>
            <person name="Mahowald M.A."/>
            <person name="Ley R.E."/>
            <person name="Lozupone C.A."/>
            <person name="Hamady M."/>
            <person name="Martens E.C."/>
            <person name="Henrissat B."/>
            <person name="Coutinho P.M."/>
            <person name="Minx P."/>
            <person name="Latreille P."/>
            <person name="Cordum H."/>
            <person name="Van Brunt A."/>
            <person name="Kim K."/>
            <person name="Fulton R.S."/>
            <person name="Fulton L.A."/>
            <person name="Clifton S.W."/>
            <person name="Wilson R.K."/>
            <person name="Knight R.D."/>
            <person name="Gordon J.I."/>
        </authorList>
    </citation>
    <scope>NUCLEOTIDE SEQUENCE [LARGE SCALE GENOMIC DNA]</scope>
    <source>
        <strain>ATCC 8503 / DSM 20701 / CIP 104284 / JCM 5825 / NCTC 11152</strain>
    </source>
</reference>
<proteinExistence type="inferred from homology"/>
<keyword id="KW-0004">4Fe-4S</keyword>
<keyword id="KW-0963">Cytoplasm</keyword>
<keyword id="KW-0408">Iron</keyword>
<keyword id="KW-0411">Iron-sulfur</keyword>
<keyword id="KW-0479">Metal-binding</keyword>
<keyword id="KW-1185">Reference proteome</keyword>
<keyword id="KW-0949">S-adenosyl-L-methionine</keyword>
<keyword id="KW-0808">Transferase</keyword>
<protein>
    <recommendedName>
        <fullName evidence="1">Lipoyl synthase</fullName>
        <ecNumber evidence="1">2.8.1.8</ecNumber>
    </recommendedName>
    <alternativeName>
        <fullName evidence="1">Lip-syn</fullName>
        <shortName evidence="1">LS</shortName>
    </alternativeName>
    <alternativeName>
        <fullName evidence="1">Lipoate synthase</fullName>
    </alternativeName>
    <alternativeName>
        <fullName evidence="1">Lipoic acid synthase</fullName>
    </alternativeName>
    <alternativeName>
        <fullName evidence="1">Sulfur insertion protein LipA</fullName>
    </alternativeName>
</protein>